<proteinExistence type="inferred from homology"/>
<evidence type="ECO:0000255" key="1">
    <source>
        <dbReference type="HAMAP-Rule" id="MF_01152"/>
    </source>
</evidence>
<reference key="1">
    <citation type="submission" date="2007-07" db="EMBL/GenBank/DDBJ databases">
        <title>Complete genome sequence of Campylobacter hominis ATCC BAA-381, a commensal isolated from the human gastrointestinal tract.</title>
        <authorList>
            <person name="Fouts D.E."/>
            <person name="Mongodin E.F."/>
            <person name="Puiu D."/>
            <person name="Sebastian Y."/>
            <person name="Miller W.G."/>
            <person name="Mandrell R.E."/>
            <person name="Nelson K.E."/>
        </authorList>
    </citation>
    <scope>NUCLEOTIDE SEQUENCE [LARGE SCALE GENOMIC DNA]</scope>
    <source>
        <strain>ATCC BAA-381 / DSM 21671 / CCUG 45161 / LMG 19568 / NCTC 13146 / CH001A</strain>
    </source>
</reference>
<accession>A7I2G3</accession>
<protein>
    <recommendedName>
        <fullName evidence="1">Chaperone protein DnaJ</fullName>
    </recommendedName>
</protein>
<feature type="chain" id="PRO_1000164247" description="Chaperone protein DnaJ">
    <location>
        <begin position="1"/>
        <end position="359"/>
    </location>
</feature>
<feature type="domain" description="J" evidence="1">
    <location>
        <begin position="3"/>
        <end position="68"/>
    </location>
</feature>
<feature type="repeat" description="CXXCXGXG motif">
    <location>
        <begin position="141"/>
        <end position="148"/>
    </location>
</feature>
<feature type="repeat" description="CXXCXGXG motif">
    <location>
        <begin position="157"/>
        <end position="164"/>
    </location>
</feature>
<feature type="repeat" description="CXXCXGXG motif">
    <location>
        <begin position="179"/>
        <end position="186"/>
    </location>
</feature>
<feature type="repeat" description="CXXCXGXG motif">
    <location>
        <begin position="193"/>
        <end position="200"/>
    </location>
</feature>
<feature type="zinc finger region" description="CR-type" evidence="1">
    <location>
        <begin position="128"/>
        <end position="205"/>
    </location>
</feature>
<feature type="binding site" evidence="1">
    <location>
        <position position="141"/>
    </location>
    <ligand>
        <name>Zn(2+)</name>
        <dbReference type="ChEBI" id="CHEBI:29105"/>
        <label>1</label>
    </ligand>
</feature>
<feature type="binding site" evidence="1">
    <location>
        <position position="144"/>
    </location>
    <ligand>
        <name>Zn(2+)</name>
        <dbReference type="ChEBI" id="CHEBI:29105"/>
        <label>1</label>
    </ligand>
</feature>
<feature type="binding site" evidence="1">
    <location>
        <position position="157"/>
    </location>
    <ligand>
        <name>Zn(2+)</name>
        <dbReference type="ChEBI" id="CHEBI:29105"/>
        <label>2</label>
    </ligand>
</feature>
<feature type="binding site" evidence="1">
    <location>
        <position position="160"/>
    </location>
    <ligand>
        <name>Zn(2+)</name>
        <dbReference type="ChEBI" id="CHEBI:29105"/>
        <label>2</label>
    </ligand>
</feature>
<feature type="binding site" evidence="1">
    <location>
        <position position="179"/>
    </location>
    <ligand>
        <name>Zn(2+)</name>
        <dbReference type="ChEBI" id="CHEBI:29105"/>
        <label>2</label>
    </ligand>
</feature>
<feature type="binding site" evidence="1">
    <location>
        <position position="182"/>
    </location>
    <ligand>
        <name>Zn(2+)</name>
        <dbReference type="ChEBI" id="CHEBI:29105"/>
        <label>2</label>
    </ligand>
</feature>
<feature type="binding site" evidence="1">
    <location>
        <position position="193"/>
    </location>
    <ligand>
        <name>Zn(2+)</name>
        <dbReference type="ChEBI" id="CHEBI:29105"/>
        <label>1</label>
    </ligand>
</feature>
<feature type="binding site" evidence="1">
    <location>
        <position position="196"/>
    </location>
    <ligand>
        <name>Zn(2+)</name>
        <dbReference type="ChEBI" id="CHEBI:29105"/>
        <label>1</label>
    </ligand>
</feature>
<organism>
    <name type="scientific">Campylobacter hominis (strain ATCC BAA-381 / DSM 21671 / CCUG 45161 / LMG 19568 / NCTC 13146 / CH001A)</name>
    <dbReference type="NCBI Taxonomy" id="360107"/>
    <lineage>
        <taxon>Bacteria</taxon>
        <taxon>Pseudomonadati</taxon>
        <taxon>Campylobacterota</taxon>
        <taxon>Epsilonproteobacteria</taxon>
        <taxon>Campylobacterales</taxon>
        <taxon>Campylobacteraceae</taxon>
        <taxon>Campylobacter</taxon>
    </lineage>
</organism>
<gene>
    <name evidence="1" type="primary">dnaJ</name>
    <name type="ordered locus">CHAB381_1148</name>
</gene>
<dbReference type="EMBL" id="CP000776">
    <property type="protein sequence ID" value="ABS51491.1"/>
    <property type="molecule type" value="Genomic_DNA"/>
</dbReference>
<dbReference type="RefSeq" id="WP_012109003.1">
    <property type="nucleotide sequence ID" value="NC_009714.1"/>
</dbReference>
<dbReference type="SMR" id="A7I2G3"/>
<dbReference type="STRING" id="360107.CHAB381_1148"/>
<dbReference type="KEGG" id="cha:CHAB381_1148"/>
<dbReference type="eggNOG" id="COG0484">
    <property type="taxonomic scope" value="Bacteria"/>
</dbReference>
<dbReference type="HOGENOM" id="CLU_017633_0_7_7"/>
<dbReference type="OrthoDB" id="9779889at2"/>
<dbReference type="Proteomes" id="UP000002407">
    <property type="component" value="Chromosome"/>
</dbReference>
<dbReference type="GO" id="GO:0005737">
    <property type="term" value="C:cytoplasm"/>
    <property type="evidence" value="ECO:0007669"/>
    <property type="project" value="UniProtKB-SubCell"/>
</dbReference>
<dbReference type="GO" id="GO:0005524">
    <property type="term" value="F:ATP binding"/>
    <property type="evidence" value="ECO:0007669"/>
    <property type="project" value="InterPro"/>
</dbReference>
<dbReference type="GO" id="GO:0031072">
    <property type="term" value="F:heat shock protein binding"/>
    <property type="evidence" value="ECO:0007669"/>
    <property type="project" value="InterPro"/>
</dbReference>
<dbReference type="GO" id="GO:0051082">
    <property type="term" value="F:unfolded protein binding"/>
    <property type="evidence" value="ECO:0007669"/>
    <property type="project" value="UniProtKB-UniRule"/>
</dbReference>
<dbReference type="GO" id="GO:0008270">
    <property type="term" value="F:zinc ion binding"/>
    <property type="evidence" value="ECO:0007669"/>
    <property type="project" value="UniProtKB-UniRule"/>
</dbReference>
<dbReference type="GO" id="GO:0051085">
    <property type="term" value="P:chaperone cofactor-dependent protein refolding"/>
    <property type="evidence" value="ECO:0007669"/>
    <property type="project" value="TreeGrafter"/>
</dbReference>
<dbReference type="GO" id="GO:0006260">
    <property type="term" value="P:DNA replication"/>
    <property type="evidence" value="ECO:0007669"/>
    <property type="project" value="UniProtKB-KW"/>
</dbReference>
<dbReference type="GO" id="GO:0042026">
    <property type="term" value="P:protein refolding"/>
    <property type="evidence" value="ECO:0007669"/>
    <property type="project" value="TreeGrafter"/>
</dbReference>
<dbReference type="GO" id="GO:0009408">
    <property type="term" value="P:response to heat"/>
    <property type="evidence" value="ECO:0007669"/>
    <property type="project" value="InterPro"/>
</dbReference>
<dbReference type="CDD" id="cd06257">
    <property type="entry name" value="DnaJ"/>
    <property type="match status" value="1"/>
</dbReference>
<dbReference type="CDD" id="cd10747">
    <property type="entry name" value="DnaJ_C"/>
    <property type="match status" value="1"/>
</dbReference>
<dbReference type="CDD" id="cd10719">
    <property type="entry name" value="DnaJ_zf"/>
    <property type="match status" value="1"/>
</dbReference>
<dbReference type="FunFam" id="1.10.287.110:FF:000034">
    <property type="entry name" value="Chaperone protein DnaJ"/>
    <property type="match status" value="1"/>
</dbReference>
<dbReference type="FunFam" id="2.10.230.10:FF:000002">
    <property type="entry name" value="Molecular chaperone DnaJ"/>
    <property type="match status" value="1"/>
</dbReference>
<dbReference type="Gene3D" id="1.10.287.110">
    <property type="entry name" value="DnaJ domain"/>
    <property type="match status" value="1"/>
</dbReference>
<dbReference type="Gene3D" id="2.10.230.10">
    <property type="entry name" value="Heat shock protein DnaJ, cysteine-rich domain"/>
    <property type="match status" value="1"/>
</dbReference>
<dbReference type="Gene3D" id="2.60.260.20">
    <property type="entry name" value="Urease metallochaperone UreE, N-terminal domain"/>
    <property type="match status" value="2"/>
</dbReference>
<dbReference type="HAMAP" id="MF_01152">
    <property type="entry name" value="DnaJ"/>
    <property type="match status" value="1"/>
</dbReference>
<dbReference type="InterPro" id="IPR012724">
    <property type="entry name" value="DnaJ"/>
</dbReference>
<dbReference type="InterPro" id="IPR002939">
    <property type="entry name" value="DnaJ_C"/>
</dbReference>
<dbReference type="InterPro" id="IPR001623">
    <property type="entry name" value="DnaJ_domain"/>
</dbReference>
<dbReference type="InterPro" id="IPR018253">
    <property type="entry name" value="DnaJ_domain_CS"/>
</dbReference>
<dbReference type="InterPro" id="IPR008971">
    <property type="entry name" value="HSP40/DnaJ_pept-bd"/>
</dbReference>
<dbReference type="InterPro" id="IPR001305">
    <property type="entry name" value="HSP_DnaJ_Cys-rich_dom"/>
</dbReference>
<dbReference type="InterPro" id="IPR036410">
    <property type="entry name" value="HSP_DnaJ_Cys-rich_dom_sf"/>
</dbReference>
<dbReference type="InterPro" id="IPR036869">
    <property type="entry name" value="J_dom_sf"/>
</dbReference>
<dbReference type="NCBIfam" id="TIGR02349">
    <property type="entry name" value="DnaJ_bact"/>
    <property type="match status" value="1"/>
</dbReference>
<dbReference type="NCBIfam" id="NF008035">
    <property type="entry name" value="PRK10767.1"/>
    <property type="match status" value="1"/>
</dbReference>
<dbReference type="PANTHER" id="PTHR43096:SF48">
    <property type="entry name" value="CHAPERONE PROTEIN DNAJ"/>
    <property type="match status" value="1"/>
</dbReference>
<dbReference type="PANTHER" id="PTHR43096">
    <property type="entry name" value="DNAJ HOMOLOG 1, MITOCHONDRIAL-RELATED"/>
    <property type="match status" value="1"/>
</dbReference>
<dbReference type="Pfam" id="PF00226">
    <property type="entry name" value="DnaJ"/>
    <property type="match status" value="1"/>
</dbReference>
<dbReference type="Pfam" id="PF01556">
    <property type="entry name" value="DnaJ_C"/>
    <property type="match status" value="1"/>
</dbReference>
<dbReference type="Pfam" id="PF00684">
    <property type="entry name" value="DnaJ_CXXCXGXG"/>
    <property type="match status" value="1"/>
</dbReference>
<dbReference type="PRINTS" id="PR00625">
    <property type="entry name" value="JDOMAIN"/>
</dbReference>
<dbReference type="SMART" id="SM00271">
    <property type="entry name" value="DnaJ"/>
    <property type="match status" value="1"/>
</dbReference>
<dbReference type="SUPFAM" id="SSF46565">
    <property type="entry name" value="Chaperone J-domain"/>
    <property type="match status" value="1"/>
</dbReference>
<dbReference type="SUPFAM" id="SSF57938">
    <property type="entry name" value="DnaJ/Hsp40 cysteine-rich domain"/>
    <property type="match status" value="1"/>
</dbReference>
<dbReference type="SUPFAM" id="SSF49493">
    <property type="entry name" value="HSP40/DnaJ peptide-binding domain"/>
    <property type="match status" value="2"/>
</dbReference>
<dbReference type="PROSITE" id="PS00636">
    <property type="entry name" value="DNAJ_1"/>
    <property type="match status" value="1"/>
</dbReference>
<dbReference type="PROSITE" id="PS50076">
    <property type="entry name" value="DNAJ_2"/>
    <property type="match status" value="1"/>
</dbReference>
<dbReference type="PROSITE" id="PS51188">
    <property type="entry name" value="ZF_CR"/>
    <property type="match status" value="1"/>
</dbReference>
<comment type="function">
    <text evidence="1">Participates actively in the response to hyperosmotic and heat shock by preventing the aggregation of stress-denatured proteins and by disaggregating proteins, also in an autonomous, DnaK-independent fashion. Unfolded proteins bind initially to DnaJ; upon interaction with the DnaJ-bound protein, DnaK hydrolyzes its bound ATP, resulting in the formation of a stable complex. GrpE releases ADP from DnaK; ATP binding to DnaK triggers the release of the substrate protein, thus completing the reaction cycle. Several rounds of ATP-dependent interactions between DnaJ, DnaK and GrpE are required for fully efficient folding. Also involved, together with DnaK and GrpE, in the DNA replication of plasmids through activation of initiation proteins.</text>
</comment>
<comment type="cofactor">
    <cofactor evidence="1">
        <name>Zn(2+)</name>
        <dbReference type="ChEBI" id="CHEBI:29105"/>
    </cofactor>
    <text evidence="1">Binds 2 Zn(2+) ions per monomer.</text>
</comment>
<comment type="subunit">
    <text evidence="1">Homodimer.</text>
</comment>
<comment type="subcellular location">
    <subcellularLocation>
        <location evidence="1">Cytoplasm</location>
    </subcellularLocation>
</comment>
<comment type="domain">
    <text evidence="1">The J domain is necessary and sufficient to stimulate DnaK ATPase activity. Zinc center 1 plays an important role in the autonomous, DnaK-independent chaperone activity of DnaJ. Zinc center 2 is essential for interaction with DnaK and for DnaJ activity.</text>
</comment>
<comment type="similarity">
    <text evidence="1">Belongs to the DnaJ family.</text>
</comment>
<keyword id="KW-0143">Chaperone</keyword>
<keyword id="KW-0963">Cytoplasm</keyword>
<keyword id="KW-0235">DNA replication</keyword>
<keyword id="KW-0479">Metal-binding</keyword>
<keyword id="KW-1185">Reference proteome</keyword>
<keyword id="KW-0677">Repeat</keyword>
<keyword id="KW-0346">Stress response</keyword>
<keyword id="KW-0862">Zinc</keyword>
<keyword id="KW-0863">Zinc-finger</keyword>
<sequence>MSDYYEILGVPKDADSDEIKKAFRKLALKYHPDRNAGDKEAEEKFKEINEAYQVLGNDERRQTYDRYGKEGLNGAFGNDFGGFDFGDIFDTFFGGGGFNKSRSQRYDDAYDLDSEILVSISFKDAFFGVSKDIKYKIKKPCKTCDGTGSKDKKLNTCPYCGGSGKIVKRSGFLSFAQTCPFCKGSGQIVKEKCHDCAGKGFIEEQVNVKFDIPKGVNTGIRIRIAKKGNISKSGEIGDLYVAVQVKDDKFFVRSADDIYIEVPVFFTQAILGKTIKVPTMHGEKELQLKVGSKDKDQFVIEKEGFENIRTKIAGNLIVQINVQTPKKLTDEQIELLEKLHESFDKTADGIFDKIKNWFK</sequence>
<name>DNAJ_CAMHC</name>